<sequence>MKNSPIGVFDSGVGGLTVARTIVDQAPTESIMYVGDTAHAPYGPKPREDIIRYSTAIADDLVARGAKMIVIACNTAASVFLDKARELYDVPVVGVIEPASRRAVAATRNGRVGVIGTTGTIASGAYQRCIANLDPNIEVHAVDCPQFVPFVERGITTGRQIMGLAEAYLEPLQDVGVDTVVLGCTHYPLLTGVIQLVMGDNVTLVSSSEEEGKEVPRVLYQEDLFNDANPEAESLDVVDANVVNDYAGPEPVRTFESTGDPHRFARLARRFLGPSITQVSHVEGLTDM</sequence>
<keyword id="KW-0133">Cell shape</keyword>
<keyword id="KW-0961">Cell wall biogenesis/degradation</keyword>
<keyword id="KW-0413">Isomerase</keyword>
<keyword id="KW-0573">Peptidoglycan synthesis</keyword>
<keyword id="KW-1185">Reference proteome</keyword>
<name>MURI_CORK4</name>
<gene>
    <name evidence="1" type="primary">murI</name>
    <name type="ordered locus">ckrop_1402</name>
</gene>
<dbReference type="EC" id="5.1.1.3" evidence="1"/>
<dbReference type="EMBL" id="CP001620">
    <property type="protein sequence ID" value="ACR18142.1"/>
    <property type="molecule type" value="Genomic_DNA"/>
</dbReference>
<dbReference type="RefSeq" id="WP_012732029.1">
    <property type="nucleotide sequence ID" value="NC_012704.1"/>
</dbReference>
<dbReference type="SMR" id="C4LJY7"/>
<dbReference type="STRING" id="645127.ckrop_1402"/>
<dbReference type="KEGG" id="ckp:ckrop_1402"/>
<dbReference type="eggNOG" id="COG0796">
    <property type="taxonomic scope" value="Bacteria"/>
</dbReference>
<dbReference type="HOGENOM" id="CLU_052344_0_1_11"/>
<dbReference type="OrthoDB" id="9801055at2"/>
<dbReference type="UniPathway" id="UPA00219"/>
<dbReference type="Proteomes" id="UP000001473">
    <property type="component" value="Chromosome"/>
</dbReference>
<dbReference type="GO" id="GO:0008881">
    <property type="term" value="F:glutamate racemase activity"/>
    <property type="evidence" value="ECO:0007669"/>
    <property type="project" value="UniProtKB-UniRule"/>
</dbReference>
<dbReference type="GO" id="GO:0071555">
    <property type="term" value="P:cell wall organization"/>
    <property type="evidence" value="ECO:0007669"/>
    <property type="project" value="UniProtKB-KW"/>
</dbReference>
<dbReference type="GO" id="GO:0009252">
    <property type="term" value="P:peptidoglycan biosynthetic process"/>
    <property type="evidence" value="ECO:0007669"/>
    <property type="project" value="UniProtKB-UniRule"/>
</dbReference>
<dbReference type="GO" id="GO:0008360">
    <property type="term" value="P:regulation of cell shape"/>
    <property type="evidence" value="ECO:0007669"/>
    <property type="project" value="UniProtKB-KW"/>
</dbReference>
<dbReference type="FunFam" id="3.40.50.1860:FF:000001">
    <property type="entry name" value="Glutamate racemase"/>
    <property type="match status" value="1"/>
</dbReference>
<dbReference type="Gene3D" id="3.40.50.1860">
    <property type="match status" value="2"/>
</dbReference>
<dbReference type="HAMAP" id="MF_00258">
    <property type="entry name" value="Glu_racemase"/>
    <property type="match status" value="1"/>
</dbReference>
<dbReference type="InterPro" id="IPR015942">
    <property type="entry name" value="Asp/Glu/hydantoin_racemase"/>
</dbReference>
<dbReference type="InterPro" id="IPR001920">
    <property type="entry name" value="Asp/Glu_race"/>
</dbReference>
<dbReference type="InterPro" id="IPR033134">
    <property type="entry name" value="Asp/Glu_racemase_AS_2"/>
</dbReference>
<dbReference type="InterPro" id="IPR004391">
    <property type="entry name" value="Glu_race"/>
</dbReference>
<dbReference type="NCBIfam" id="TIGR00067">
    <property type="entry name" value="glut_race"/>
    <property type="match status" value="1"/>
</dbReference>
<dbReference type="PANTHER" id="PTHR21198">
    <property type="entry name" value="GLUTAMATE RACEMASE"/>
    <property type="match status" value="1"/>
</dbReference>
<dbReference type="PANTHER" id="PTHR21198:SF2">
    <property type="entry name" value="GLUTAMATE RACEMASE"/>
    <property type="match status" value="1"/>
</dbReference>
<dbReference type="Pfam" id="PF01177">
    <property type="entry name" value="Asp_Glu_race"/>
    <property type="match status" value="1"/>
</dbReference>
<dbReference type="SUPFAM" id="SSF53681">
    <property type="entry name" value="Aspartate/glutamate racemase"/>
    <property type="match status" value="2"/>
</dbReference>
<dbReference type="PROSITE" id="PS00924">
    <property type="entry name" value="ASP_GLU_RACEMASE_2"/>
    <property type="match status" value="1"/>
</dbReference>
<reference key="1">
    <citation type="journal article" date="2008" name="J. Biotechnol.">
        <title>Ultrafast pyrosequencing of Corynebacterium kroppenstedtii DSM44385 revealed insights into the physiology of a lipophilic corynebacterium that lacks mycolic acids.</title>
        <authorList>
            <person name="Tauch A."/>
            <person name="Schneider J."/>
            <person name="Szczepanowski R."/>
            <person name="Tilker A."/>
            <person name="Viehoever P."/>
            <person name="Gartemann K.-H."/>
            <person name="Arnold W."/>
            <person name="Blom J."/>
            <person name="Brinkrolf K."/>
            <person name="Brune I."/>
            <person name="Goetker S."/>
            <person name="Weisshaar B."/>
            <person name="Goesmann A."/>
            <person name="Droege M."/>
            <person name="Puehler A."/>
        </authorList>
    </citation>
    <scope>NUCLEOTIDE SEQUENCE [LARGE SCALE GENOMIC DNA]</scope>
    <source>
        <strain>DSM 44385 / JCM 11950 / CIP 105744 / CCUG 35717</strain>
    </source>
</reference>
<organism>
    <name type="scientific">Corynebacterium kroppenstedtii (strain DSM 44385 / JCM 11950 / CIP 105744 / CCUG 35717)</name>
    <dbReference type="NCBI Taxonomy" id="645127"/>
    <lineage>
        <taxon>Bacteria</taxon>
        <taxon>Bacillati</taxon>
        <taxon>Actinomycetota</taxon>
        <taxon>Actinomycetes</taxon>
        <taxon>Mycobacteriales</taxon>
        <taxon>Corynebacteriaceae</taxon>
        <taxon>Corynebacterium</taxon>
    </lineage>
</organism>
<accession>C4LJY7</accession>
<protein>
    <recommendedName>
        <fullName evidence="1">Glutamate racemase</fullName>
        <ecNumber evidence="1">5.1.1.3</ecNumber>
    </recommendedName>
</protein>
<comment type="function">
    <text evidence="1">Provides the (R)-glutamate required for cell wall biosynthesis.</text>
</comment>
<comment type="catalytic activity">
    <reaction evidence="1">
        <text>L-glutamate = D-glutamate</text>
        <dbReference type="Rhea" id="RHEA:12813"/>
        <dbReference type="ChEBI" id="CHEBI:29985"/>
        <dbReference type="ChEBI" id="CHEBI:29986"/>
        <dbReference type="EC" id="5.1.1.3"/>
    </reaction>
</comment>
<comment type="pathway">
    <text evidence="1">Cell wall biogenesis; peptidoglycan biosynthesis.</text>
</comment>
<comment type="similarity">
    <text evidence="1">Belongs to the aspartate/glutamate racemases family.</text>
</comment>
<feature type="chain" id="PRO_1000204625" description="Glutamate racemase">
    <location>
        <begin position="1"/>
        <end position="288"/>
    </location>
</feature>
<feature type="active site" description="Proton donor/acceptor" evidence="1">
    <location>
        <position position="73"/>
    </location>
</feature>
<feature type="active site" description="Proton donor/acceptor" evidence="1">
    <location>
        <position position="184"/>
    </location>
</feature>
<feature type="binding site" evidence="1">
    <location>
        <begin position="10"/>
        <end position="11"/>
    </location>
    <ligand>
        <name>substrate</name>
    </ligand>
</feature>
<feature type="binding site" evidence="1">
    <location>
        <begin position="42"/>
        <end position="43"/>
    </location>
    <ligand>
        <name>substrate</name>
    </ligand>
</feature>
<feature type="binding site" evidence="1">
    <location>
        <begin position="74"/>
        <end position="75"/>
    </location>
    <ligand>
        <name>substrate</name>
    </ligand>
</feature>
<feature type="binding site" evidence="1">
    <location>
        <begin position="185"/>
        <end position="186"/>
    </location>
    <ligand>
        <name>substrate</name>
    </ligand>
</feature>
<proteinExistence type="inferred from homology"/>
<evidence type="ECO:0000255" key="1">
    <source>
        <dbReference type="HAMAP-Rule" id="MF_00258"/>
    </source>
</evidence>